<proteinExistence type="inferred from homology"/>
<protein>
    <recommendedName>
        <fullName evidence="1">tRNA dimethylallyltransferase</fullName>
        <ecNumber evidence="1">2.5.1.75</ecNumber>
    </recommendedName>
    <alternativeName>
        <fullName evidence="1">Dimethylallyl diphosphate:tRNA dimethylallyltransferase</fullName>
        <shortName evidence="1">DMAPP:tRNA dimethylallyltransferase</shortName>
        <shortName evidence="1">DMATase</shortName>
    </alternativeName>
    <alternativeName>
        <fullName evidence="1">Isopentenyl-diphosphate:tRNA isopentenyltransferase</fullName>
        <shortName evidence="1">IPP transferase</shortName>
        <shortName evidence="1">IPPT</shortName>
        <shortName evidence="1">IPTase</shortName>
    </alternativeName>
</protein>
<keyword id="KW-0067">ATP-binding</keyword>
<keyword id="KW-0460">Magnesium</keyword>
<keyword id="KW-0547">Nucleotide-binding</keyword>
<keyword id="KW-0808">Transferase</keyword>
<keyword id="KW-0819">tRNA processing</keyword>
<dbReference type="EC" id="2.5.1.75" evidence="1"/>
<dbReference type="EMBL" id="CP000671">
    <property type="protein sequence ID" value="ABQ98021.1"/>
    <property type="molecule type" value="Genomic_DNA"/>
</dbReference>
<dbReference type="SMR" id="A5UB70"/>
<dbReference type="KEGG" id="hip:CGSHiEE_02955"/>
<dbReference type="HOGENOM" id="CLU_032616_0_0_6"/>
<dbReference type="GO" id="GO:0005524">
    <property type="term" value="F:ATP binding"/>
    <property type="evidence" value="ECO:0007669"/>
    <property type="project" value="UniProtKB-UniRule"/>
</dbReference>
<dbReference type="GO" id="GO:0052381">
    <property type="term" value="F:tRNA dimethylallyltransferase activity"/>
    <property type="evidence" value="ECO:0007669"/>
    <property type="project" value="UniProtKB-UniRule"/>
</dbReference>
<dbReference type="GO" id="GO:0006400">
    <property type="term" value="P:tRNA modification"/>
    <property type="evidence" value="ECO:0007669"/>
    <property type="project" value="TreeGrafter"/>
</dbReference>
<dbReference type="FunFam" id="1.10.20.140:FF:000001">
    <property type="entry name" value="tRNA dimethylallyltransferase"/>
    <property type="match status" value="1"/>
</dbReference>
<dbReference type="Gene3D" id="1.10.20.140">
    <property type="match status" value="1"/>
</dbReference>
<dbReference type="Gene3D" id="3.40.50.300">
    <property type="entry name" value="P-loop containing nucleotide triphosphate hydrolases"/>
    <property type="match status" value="1"/>
</dbReference>
<dbReference type="HAMAP" id="MF_00185">
    <property type="entry name" value="IPP_trans"/>
    <property type="match status" value="1"/>
</dbReference>
<dbReference type="InterPro" id="IPR039657">
    <property type="entry name" value="Dimethylallyltransferase"/>
</dbReference>
<dbReference type="InterPro" id="IPR018022">
    <property type="entry name" value="IPT"/>
</dbReference>
<dbReference type="InterPro" id="IPR027417">
    <property type="entry name" value="P-loop_NTPase"/>
</dbReference>
<dbReference type="NCBIfam" id="TIGR00174">
    <property type="entry name" value="miaA"/>
    <property type="match status" value="1"/>
</dbReference>
<dbReference type="PANTHER" id="PTHR11088">
    <property type="entry name" value="TRNA DIMETHYLALLYLTRANSFERASE"/>
    <property type="match status" value="1"/>
</dbReference>
<dbReference type="PANTHER" id="PTHR11088:SF60">
    <property type="entry name" value="TRNA DIMETHYLALLYLTRANSFERASE"/>
    <property type="match status" value="1"/>
</dbReference>
<dbReference type="Pfam" id="PF01715">
    <property type="entry name" value="IPPT"/>
    <property type="match status" value="1"/>
</dbReference>
<dbReference type="SUPFAM" id="SSF52540">
    <property type="entry name" value="P-loop containing nucleoside triphosphate hydrolases"/>
    <property type="match status" value="1"/>
</dbReference>
<name>MIAA_HAEIE</name>
<comment type="function">
    <text evidence="1">Catalyzes the transfer of a dimethylallyl group onto the adenine at position 37 in tRNAs that read codons beginning with uridine, leading to the formation of N6-(dimethylallyl)adenosine (i(6)A).</text>
</comment>
<comment type="catalytic activity">
    <reaction evidence="1">
        <text>adenosine(37) in tRNA + dimethylallyl diphosphate = N(6)-dimethylallyladenosine(37) in tRNA + diphosphate</text>
        <dbReference type="Rhea" id="RHEA:26482"/>
        <dbReference type="Rhea" id="RHEA-COMP:10162"/>
        <dbReference type="Rhea" id="RHEA-COMP:10375"/>
        <dbReference type="ChEBI" id="CHEBI:33019"/>
        <dbReference type="ChEBI" id="CHEBI:57623"/>
        <dbReference type="ChEBI" id="CHEBI:74411"/>
        <dbReference type="ChEBI" id="CHEBI:74415"/>
        <dbReference type="EC" id="2.5.1.75"/>
    </reaction>
</comment>
<comment type="cofactor">
    <cofactor evidence="1">
        <name>Mg(2+)</name>
        <dbReference type="ChEBI" id="CHEBI:18420"/>
    </cofactor>
</comment>
<comment type="subunit">
    <text evidence="1">Monomer.</text>
</comment>
<comment type="similarity">
    <text evidence="1">Belongs to the IPP transferase family.</text>
</comment>
<accession>A5UB70</accession>
<organism>
    <name type="scientific">Haemophilus influenzae (strain PittEE)</name>
    <dbReference type="NCBI Taxonomy" id="374930"/>
    <lineage>
        <taxon>Bacteria</taxon>
        <taxon>Pseudomonadati</taxon>
        <taxon>Pseudomonadota</taxon>
        <taxon>Gammaproteobacteria</taxon>
        <taxon>Pasteurellales</taxon>
        <taxon>Pasteurellaceae</taxon>
        <taxon>Haemophilus</taxon>
    </lineage>
</organism>
<feature type="chain" id="PRO_1000020606" description="tRNA dimethylallyltransferase">
    <location>
        <begin position="1"/>
        <end position="311"/>
    </location>
</feature>
<feature type="region of interest" description="Interaction with substrate tRNA" evidence="1">
    <location>
        <begin position="35"/>
        <end position="38"/>
    </location>
</feature>
<feature type="region of interest" description="Interaction with substrate tRNA" evidence="1">
    <location>
        <begin position="159"/>
        <end position="163"/>
    </location>
</feature>
<feature type="region of interest" description="Interaction with substrate tRNA" evidence="1">
    <location>
        <begin position="240"/>
        <end position="245"/>
    </location>
</feature>
<feature type="binding site" evidence="1">
    <location>
        <begin position="10"/>
        <end position="17"/>
    </location>
    <ligand>
        <name>ATP</name>
        <dbReference type="ChEBI" id="CHEBI:30616"/>
    </ligand>
</feature>
<feature type="binding site" evidence="1">
    <location>
        <begin position="12"/>
        <end position="17"/>
    </location>
    <ligand>
        <name>substrate</name>
    </ligand>
</feature>
<feature type="site" description="Interaction with substrate tRNA" evidence="1">
    <location>
        <position position="101"/>
    </location>
</feature>
<feature type="site" description="Interaction with substrate tRNA" evidence="1">
    <location>
        <position position="123"/>
    </location>
</feature>
<reference key="1">
    <citation type="journal article" date="2007" name="Genome Biol.">
        <title>Characterization and modeling of the Haemophilus influenzae core and supragenomes based on the complete genomic sequences of Rd and 12 clinical nontypeable strains.</title>
        <authorList>
            <person name="Hogg J.S."/>
            <person name="Hu F.Z."/>
            <person name="Janto B."/>
            <person name="Boissy R."/>
            <person name="Hayes J."/>
            <person name="Keefe R."/>
            <person name="Post J.C."/>
            <person name="Ehrlich G.D."/>
        </authorList>
    </citation>
    <scope>NUCLEOTIDE SEQUENCE [LARGE SCALE GENOMIC DNA]</scope>
    <source>
        <strain>PittEE</strain>
    </source>
</reference>
<evidence type="ECO:0000255" key="1">
    <source>
        <dbReference type="HAMAP-Rule" id="MF_00185"/>
    </source>
</evidence>
<sequence>MKPTTIFLMGPTASGKTDLAIQLRSSLPVEVISVDSALIYKGMDIGTAKPSKEELALAPHRLIDILDPSESYSAMNFRDDALREMADITAQGKIPLLVGGTMLYYKALIEGLSPLPSADENIRAELEQKAAQQGWAALHTELAKIDPMSAARINPSDSQRINRALEVFYITGKSLTELTEEKGEALPYDFVQFAIAPQDRHVLHERIEQRFHKMIELGFQEEVEKLYTRGDLNINLPSIRCVGYRQMWEYLQGDYDHEEMIFRGICATRQLAKRQLTWLRGWKTPIQWLDSLQPQQAKETVLRHLDSYQKG</sequence>
<gene>
    <name evidence="1" type="primary">miaA</name>
    <name type="ordered locus">CGSHiEE_02955</name>
</gene>